<organism>
    <name type="scientific">Pectobacterium carotovorum subsp. carotovorum (strain PC1)</name>
    <dbReference type="NCBI Taxonomy" id="561230"/>
    <lineage>
        <taxon>Bacteria</taxon>
        <taxon>Pseudomonadati</taxon>
        <taxon>Pseudomonadota</taxon>
        <taxon>Gammaproteobacteria</taxon>
        <taxon>Enterobacterales</taxon>
        <taxon>Pectobacteriaceae</taxon>
        <taxon>Pectobacterium</taxon>
    </lineage>
</organism>
<dbReference type="EC" id="2.4.2.9" evidence="1"/>
<dbReference type="EMBL" id="CP001657">
    <property type="protein sequence ID" value="ACT12178.1"/>
    <property type="molecule type" value="Genomic_DNA"/>
</dbReference>
<dbReference type="RefSeq" id="WP_014914591.1">
    <property type="nucleotide sequence ID" value="NC_012917.1"/>
</dbReference>
<dbReference type="SMR" id="C6DBR1"/>
<dbReference type="STRING" id="561230.PC1_1130"/>
<dbReference type="GeneID" id="90762549"/>
<dbReference type="KEGG" id="pct:PC1_1130"/>
<dbReference type="eggNOG" id="COG0035">
    <property type="taxonomic scope" value="Bacteria"/>
</dbReference>
<dbReference type="HOGENOM" id="CLU_067096_2_2_6"/>
<dbReference type="OrthoDB" id="9781675at2"/>
<dbReference type="UniPathway" id="UPA00574">
    <property type="reaction ID" value="UER00636"/>
</dbReference>
<dbReference type="Proteomes" id="UP000002736">
    <property type="component" value="Chromosome"/>
</dbReference>
<dbReference type="GO" id="GO:0005525">
    <property type="term" value="F:GTP binding"/>
    <property type="evidence" value="ECO:0007669"/>
    <property type="project" value="UniProtKB-KW"/>
</dbReference>
<dbReference type="GO" id="GO:0000287">
    <property type="term" value="F:magnesium ion binding"/>
    <property type="evidence" value="ECO:0007669"/>
    <property type="project" value="UniProtKB-UniRule"/>
</dbReference>
<dbReference type="GO" id="GO:0004845">
    <property type="term" value="F:uracil phosphoribosyltransferase activity"/>
    <property type="evidence" value="ECO:0007669"/>
    <property type="project" value="UniProtKB-UniRule"/>
</dbReference>
<dbReference type="GO" id="GO:0044206">
    <property type="term" value="P:UMP salvage"/>
    <property type="evidence" value="ECO:0007669"/>
    <property type="project" value="UniProtKB-UniRule"/>
</dbReference>
<dbReference type="GO" id="GO:0006223">
    <property type="term" value="P:uracil salvage"/>
    <property type="evidence" value="ECO:0007669"/>
    <property type="project" value="InterPro"/>
</dbReference>
<dbReference type="CDD" id="cd06223">
    <property type="entry name" value="PRTases_typeI"/>
    <property type="match status" value="1"/>
</dbReference>
<dbReference type="FunFam" id="3.40.50.2020:FF:000003">
    <property type="entry name" value="Uracil phosphoribosyltransferase"/>
    <property type="match status" value="1"/>
</dbReference>
<dbReference type="Gene3D" id="3.40.50.2020">
    <property type="match status" value="1"/>
</dbReference>
<dbReference type="HAMAP" id="MF_01218_B">
    <property type="entry name" value="Upp_B"/>
    <property type="match status" value="1"/>
</dbReference>
<dbReference type="InterPro" id="IPR000836">
    <property type="entry name" value="PRibTrfase_dom"/>
</dbReference>
<dbReference type="InterPro" id="IPR029057">
    <property type="entry name" value="PRTase-like"/>
</dbReference>
<dbReference type="InterPro" id="IPR034332">
    <property type="entry name" value="Upp_B"/>
</dbReference>
<dbReference type="InterPro" id="IPR050054">
    <property type="entry name" value="UPRTase/APRTase"/>
</dbReference>
<dbReference type="InterPro" id="IPR005765">
    <property type="entry name" value="Ura_phspho_trans"/>
</dbReference>
<dbReference type="NCBIfam" id="NF001097">
    <property type="entry name" value="PRK00129.1"/>
    <property type="match status" value="1"/>
</dbReference>
<dbReference type="NCBIfam" id="TIGR01091">
    <property type="entry name" value="upp"/>
    <property type="match status" value="1"/>
</dbReference>
<dbReference type="PANTHER" id="PTHR32315">
    <property type="entry name" value="ADENINE PHOSPHORIBOSYLTRANSFERASE"/>
    <property type="match status" value="1"/>
</dbReference>
<dbReference type="PANTHER" id="PTHR32315:SF4">
    <property type="entry name" value="URACIL PHOSPHORIBOSYLTRANSFERASE, CHLOROPLASTIC"/>
    <property type="match status" value="1"/>
</dbReference>
<dbReference type="Pfam" id="PF14681">
    <property type="entry name" value="UPRTase"/>
    <property type="match status" value="1"/>
</dbReference>
<dbReference type="SUPFAM" id="SSF53271">
    <property type="entry name" value="PRTase-like"/>
    <property type="match status" value="1"/>
</dbReference>
<proteinExistence type="inferred from homology"/>
<evidence type="ECO:0000255" key="1">
    <source>
        <dbReference type="HAMAP-Rule" id="MF_01218"/>
    </source>
</evidence>
<sequence>MKIVEVKHPLVKHKLGLMRENDISTKRFRELASEVGSLLTYEATADLATEKVTIDGWCGPVEVDQIKGKKITVVPILRAGLGMMEGVLENVPSARISVVGIYRDEETLEPVPYFQKLVSNIEERMALVVDPMLATGGSMIATIDLLKKAGCHSIKVLVLVAAPEGIAALEKAHPDIELYTASIDKGLNEQGYIMPGLGDAGDKIFGTK</sequence>
<comment type="function">
    <text evidence="1">Catalyzes the conversion of uracil and 5-phospho-alpha-D-ribose 1-diphosphate (PRPP) to UMP and diphosphate.</text>
</comment>
<comment type="catalytic activity">
    <reaction evidence="1">
        <text>UMP + diphosphate = 5-phospho-alpha-D-ribose 1-diphosphate + uracil</text>
        <dbReference type="Rhea" id="RHEA:13017"/>
        <dbReference type="ChEBI" id="CHEBI:17568"/>
        <dbReference type="ChEBI" id="CHEBI:33019"/>
        <dbReference type="ChEBI" id="CHEBI:57865"/>
        <dbReference type="ChEBI" id="CHEBI:58017"/>
        <dbReference type="EC" id="2.4.2.9"/>
    </reaction>
</comment>
<comment type="cofactor">
    <cofactor evidence="1">
        <name>Mg(2+)</name>
        <dbReference type="ChEBI" id="CHEBI:18420"/>
    </cofactor>
    <text evidence="1">Binds 1 Mg(2+) ion per subunit. The magnesium is bound as Mg-PRPP.</text>
</comment>
<comment type="activity regulation">
    <text evidence="1">Allosterically activated by GTP.</text>
</comment>
<comment type="pathway">
    <text evidence="1">Pyrimidine metabolism; UMP biosynthesis via salvage pathway; UMP from uracil: step 1/1.</text>
</comment>
<comment type="similarity">
    <text evidence="1">Belongs to the UPRTase family.</text>
</comment>
<feature type="chain" id="PRO_1000213936" description="Uracil phosphoribosyltransferase">
    <location>
        <begin position="1"/>
        <end position="208"/>
    </location>
</feature>
<feature type="binding site" evidence="1">
    <location>
        <position position="78"/>
    </location>
    <ligand>
        <name>5-phospho-alpha-D-ribose 1-diphosphate</name>
        <dbReference type="ChEBI" id="CHEBI:58017"/>
    </ligand>
</feature>
<feature type="binding site" evidence="1">
    <location>
        <position position="103"/>
    </location>
    <ligand>
        <name>5-phospho-alpha-D-ribose 1-diphosphate</name>
        <dbReference type="ChEBI" id="CHEBI:58017"/>
    </ligand>
</feature>
<feature type="binding site" evidence="1">
    <location>
        <begin position="130"/>
        <end position="138"/>
    </location>
    <ligand>
        <name>5-phospho-alpha-D-ribose 1-diphosphate</name>
        <dbReference type="ChEBI" id="CHEBI:58017"/>
    </ligand>
</feature>
<feature type="binding site" evidence="1">
    <location>
        <position position="193"/>
    </location>
    <ligand>
        <name>uracil</name>
        <dbReference type="ChEBI" id="CHEBI:17568"/>
    </ligand>
</feature>
<feature type="binding site" evidence="1">
    <location>
        <begin position="198"/>
        <end position="200"/>
    </location>
    <ligand>
        <name>uracil</name>
        <dbReference type="ChEBI" id="CHEBI:17568"/>
    </ligand>
</feature>
<feature type="binding site" evidence="1">
    <location>
        <position position="199"/>
    </location>
    <ligand>
        <name>5-phospho-alpha-D-ribose 1-diphosphate</name>
        <dbReference type="ChEBI" id="CHEBI:58017"/>
    </ligand>
</feature>
<name>UPP_PECCP</name>
<accession>C6DBR1</accession>
<protein>
    <recommendedName>
        <fullName evidence="1">Uracil phosphoribosyltransferase</fullName>
        <ecNumber evidence="1">2.4.2.9</ecNumber>
    </recommendedName>
    <alternativeName>
        <fullName evidence="1">UMP pyrophosphorylase</fullName>
    </alternativeName>
    <alternativeName>
        <fullName evidence="1">UPRTase</fullName>
    </alternativeName>
</protein>
<reference key="1">
    <citation type="submission" date="2009-07" db="EMBL/GenBank/DDBJ databases">
        <title>Complete sequence of Pectobacterium carotovorum subsp. carotovorum PC1.</title>
        <authorList>
            <consortium name="US DOE Joint Genome Institute"/>
            <person name="Lucas S."/>
            <person name="Copeland A."/>
            <person name="Lapidus A."/>
            <person name="Glavina del Rio T."/>
            <person name="Tice H."/>
            <person name="Bruce D."/>
            <person name="Goodwin L."/>
            <person name="Pitluck S."/>
            <person name="Munk A.C."/>
            <person name="Brettin T."/>
            <person name="Detter J.C."/>
            <person name="Han C."/>
            <person name="Tapia R."/>
            <person name="Larimer F."/>
            <person name="Land M."/>
            <person name="Hauser L."/>
            <person name="Kyrpides N."/>
            <person name="Mikhailova N."/>
            <person name="Balakrishnan V."/>
            <person name="Glasner J."/>
            <person name="Perna N.T."/>
        </authorList>
    </citation>
    <scope>NUCLEOTIDE SEQUENCE [LARGE SCALE GENOMIC DNA]</scope>
    <source>
        <strain>PC1</strain>
    </source>
</reference>
<keyword id="KW-0021">Allosteric enzyme</keyword>
<keyword id="KW-0328">Glycosyltransferase</keyword>
<keyword id="KW-0342">GTP-binding</keyword>
<keyword id="KW-0460">Magnesium</keyword>
<keyword id="KW-0547">Nucleotide-binding</keyword>
<keyword id="KW-0808">Transferase</keyword>
<gene>
    <name evidence="1" type="primary">upp</name>
    <name type="ordered locus">PC1_1130</name>
</gene>